<feature type="initiator methionine" description="Removed" evidence="1">
    <location>
        <position position="1"/>
    </location>
</feature>
<feature type="chain" id="PRO_0000198291" description="Calmodulin">
    <location>
        <begin position="2"/>
        <end position="149"/>
    </location>
</feature>
<feature type="domain" description="EF-hand 1" evidence="2">
    <location>
        <begin position="8"/>
        <end position="43"/>
    </location>
</feature>
<feature type="domain" description="EF-hand 2" evidence="2">
    <location>
        <begin position="44"/>
        <end position="79"/>
    </location>
</feature>
<feature type="domain" description="EF-hand 3" evidence="2">
    <location>
        <begin position="81"/>
        <end position="116"/>
    </location>
</feature>
<feature type="domain" description="EF-hand 4" evidence="2">
    <location>
        <begin position="117"/>
        <end position="149"/>
    </location>
</feature>
<feature type="binding site" evidence="2">
    <location>
        <position position="21"/>
    </location>
    <ligand>
        <name>Ca(2+)</name>
        <dbReference type="ChEBI" id="CHEBI:29108"/>
        <label>1</label>
    </ligand>
</feature>
<feature type="binding site" evidence="2">
    <location>
        <position position="23"/>
    </location>
    <ligand>
        <name>Ca(2+)</name>
        <dbReference type="ChEBI" id="CHEBI:29108"/>
        <label>1</label>
    </ligand>
</feature>
<feature type="binding site" evidence="2">
    <location>
        <position position="25"/>
    </location>
    <ligand>
        <name>Ca(2+)</name>
        <dbReference type="ChEBI" id="CHEBI:29108"/>
        <label>1</label>
    </ligand>
</feature>
<feature type="binding site" evidence="2">
    <location>
        <position position="27"/>
    </location>
    <ligand>
        <name>Ca(2+)</name>
        <dbReference type="ChEBI" id="CHEBI:29108"/>
        <label>1</label>
    </ligand>
</feature>
<feature type="binding site" evidence="2">
    <location>
        <position position="32"/>
    </location>
    <ligand>
        <name>Ca(2+)</name>
        <dbReference type="ChEBI" id="CHEBI:29108"/>
        <label>1</label>
    </ligand>
</feature>
<feature type="binding site" evidence="2">
    <location>
        <position position="57"/>
    </location>
    <ligand>
        <name>Ca(2+)</name>
        <dbReference type="ChEBI" id="CHEBI:29108"/>
        <label>2</label>
    </ligand>
</feature>
<feature type="binding site" evidence="2">
    <location>
        <position position="59"/>
    </location>
    <ligand>
        <name>Ca(2+)</name>
        <dbReference type="ChEBI" id="CHEBI:29108"/>
        <label>2</label>
    </ligand>
</feature>
<feature type="binding site" evidence="2">
    <location>
        <position position="61"/>
    </location>
    <ligand>
        <name>Ca(2+)</name>
        <dbReference type="ChEBI" id="CHEBI:29108"/>
        <label>2</label>
    </ligand>
</feature>
<feature type="binding site" evidence="2">
    <location>
        <position position="63"/>
    </location>
    <ligand>
        <name>Ca(2+)</name>
        <dbReference type="ChEBI" id="CHEBI:29108"/>
        <label>2</label>
    </ligand>
</feature>
<feature type="binding site" evidence="2">
    <location>
        <position position="68"/>
    </location>
    <ligand>
        <name>Ca(2+)</name>
        <dbReference type="ChEBI" id="CHEBI:29108"/>
        <label>2</label>
    </ligand>
</feature>
<feature type="binding site" evidence="2">
    <location>
        <position position="94"/>
    </location>
    <ligand>
        <name>Ca(2+)</name>
        <dbReference type="ChEBI" id="CHEBI:29108"/>
        <label>3</label>
    </ligand>
</feature>
<feature type="binding site" evidence="2">
    <location>
        <position position="96"/>
    </location>
    <ligand>
        <name>Ca(2+)</name>
        <dbReference type="ChEBI" id="CHEBI:29108"/>
        <label>3</label>
    </ligand>
</feature>
<feature type="binding site" evidence="2">
    <location>
        <position position="98"/>
    </location>
    <ligand>
        <name>Ca(2+)</name>
        <dbReference type="ChEBI" id="CHEBI:29108"/>
        <label>3</label>
    </ligand>
</feature>
<feature type="binding site" evidence="2">
    <location>
        <position position="105"/>
    </location>
    <ligand>
        <name>Ca(2+)</name>
        <dbReference type="ChEBI" id="CHEBI:29108"/>
        <label>3</label>
    </ligand>
</feature>
<feature type="binding site" evidence="2">
    <location>
        <position position="130"/>
    </location>
    <ligand>
        <name>Ca(2+)</name>
        <dbReference type="ChEBI" id="CHEBI:29108"/>
        <label>4</label>
    </ligand>
</feature>
<feature type="binding site" evidence="2">
    <location>
        <position position="132"/>
    </location>
    <ligand>
        <name>Ca(2+)</name>
        <dbReference type="ChEBI" id="CHEBI:29108"/>
        <label>4</label>
    </ligand>
</feature>
<feature type="binding site" evidence="2">
    <location>
        <position position="134"/>
    </location>
    <ligand>
        <name>Ca(2+)</name>
        <dbReference type="ChEBI" id="CHEBI:29108"/>
        <label>4</label>
    </ligand>
</feature>
<feature type="binding site" evidence="2">
    <location>
        <position position="136"/>
    </location>
    <ligand>
        <name>Ca(2+)</name>
        <dbReference type="ChEBI" id="CHEBI:29108"/>
        <label>4</label>
    </ligand>
</feature>
<feature type="binding site" evidence="2">
    <location>
        <position position="141"/>
    </location>
    <ligand>
        <name>Ca(2+)</name>
        <dbReference type="ChEBI" id="CHEBI:29108"/>
        <label>4</label>
    </ligand>
</feature>
<feature type="modified residue" description="N-acetylalanine" evidence="1">
    <location>
        <position position="2"/>
    </location>
</feature>
<feature type="modified residue" description="N6,N6,N6-trimethyllysine" evidence="1">
    <location>
        <position position="116"/>
    </location>
</feature>
<dbReference type="EMBL" id="M27303">
    <property type="protein sequence ID" value="AAA32938.1"/>
    <property type="molecule type" value="mRNA"/>
</dbReference>
<dbReference type="PIR" id="A30900">
    <property type="entry name" value="MCBH"/>
</dbReference>
<dbReference type="SMR" id="P62162"/>
<dbReference type="IntAct" id="P62162">
    <property type="interactions" value="1"/>
</dbReference>
<dbReference type="ExpressionAtlas" id="P62162">
    <property type="expression patterns" value="baseline and differential"/>
</dbReference>
<dbReference type="GO" id="GO:0016460">
    <property type="term" value="C:myosin II complex"/>
    <property type="evidence" value="ECO:0007669"/>
    <property type="project" value="TreeGrafter"/>
</dbReference>
<dbReference type="GO" id="GO:0005509">
    <property type="term" value="F:calcium ion binding"/>
    <property type="evidence" value="ECO:0007669"/>
    <property type="project" value="InterPro"/>
</dbReference>
<dbReference type="CDD" id="cd00051">
    <property type="entry name" value="EFh"/>
    <property type="match status" value="2"/>
</dbReference>
<dbReference type="FunFam" id="1.10.238.10:FF:000034">
    <property type="entry name" value="Calmodulin"/>
    <property type="match status" value="1"/>
</dbReference>
<dbReference type="FunFam" id="1.10.238.10:FF:000042">
    <property type="entry name" value="Calmodulin"/>
    <property type="match status" value="1"/>
</dbReference>
<dbReference type="Gene3D" id="1.10.238.10">
    <property type="entry name" value="EF-hand"/>
    <property type="match status" value="3"/>
</dbReference>
<dbReference type="InterPro" id="IPR050230">
    <property type="entry name" value="CALM/Myosin/TropC-like"/>
</dbReference>
<dbReference type="InterPro" id="IPR011992">
    <property type="entry name" value="EF-hand-dom_pair"/>
</dbReference>
<dbReference type="InterPro" id="IPR018247">
    <property type="entry name" value="EF_Hand_1_Ca_BS"/>
</dbReference>
<dbReference type="InterPro" id="IPR002048">
    <property type="entry name" value="EF_hand_dom"/>
</dbReference>
<dbReference type="PANTHER" id="PTHR23048:SF53">
    <property type="entry name" value="CALMODULIN"/>
    <property type="match status" value="1"/>
</dbReference>
<dbReference type="PANTHER" id="PTHR23048">
    <property type="entry name" value="MYOSIN LIGHT CHAIN 1, 3"/>
    <property type="match status" value="1"/>
</dbReference>
<dbReference type="Pfam" id="PF13499">
    <property type="entry name" value="EF-hand_7"/>
    <property type="match status" value="2"/>
</dbReference>
<dbReference type="SMART" id="SM00054">
    <property type="entry name" value="EFh"/>
    <property type="match status" value="4"/>
</dbReference>
<dbReference type="SUPFAM" id="SSF47473">
    <property type="entry name" value="EF-hand"/>
    <property type="match status" value="1"/>
</dbReference>
<dbReference type="PROSITE" id="PS00018">
    <property type="entry name" value="EF_HAND_1"/>
    <property type="match status" value="4"/>
</dbReference>
<dbReference type="PROSITE" id="PS50222">
    <property type="entry name" value="EF_HAND_2"/>
    <property type="match status" value="4"/>
</dbReference>
<name>CALM_HORVU</name>
<proteinExistence type="evidence at transcript level"/>
<accession>P62162</accession>
<accession>P13565</accession>
<protein>
    <recommendedName>
        <fullName>Calmodulin</fullName>
        <shortName>CaM</shortName>
    </recommendedName>
</protein>
<reference key="1">
    <citation type="journal article" date="1989" name="Plant Physiol.">
        <title>Cloning of cDNA sequences encoding the calcium-binding protein, calmodulin, from barley (Hordeum vulgare L.).</title>
        <authorList>
            <person name="Ling V."/>
            <person name="Zielinski R.E."/>
        </authorList>
    </citation>
    <scope>NUCLEOTIDE SEQUENCE [MRNA]</scope>
</reference>
<keyword id="KW-0007">Acetylation</keyword>
<keyword id="KW-0106">Calcium</keyword>
<keyword id="KW-0479">Metal-binding</keyword>
<keyword id="KW-0488">Methylation</keyword>
<keyword id="KW-0677">Repeat</keyword>
<evidence type="ECO:0000250" key="1"/>
<evidence type="ECO:0000255" key="2">
    <source>
        <dbReference type="PROSITE-ProRule" id="PRU00448"/>
    </source>
</evidence>
<evidence type="ECO:0000305" key="3"/>
<sequence length="149" mass="16832">MADQLTDDQIAEFKEAFSLFDKDGDGCITTKELGTVMRSLGQNPTEAELQDMINEVDADGNGTIDFPEFLNLMARKMKDTDSEEELKEAFRVFDKDQNGFISAAELRHVMTNLGEKLTDEEVDEMIREADVDGDGQINYEEFVKVMMAK</sequence>
<organism>
    <name type="scientific">Hordeum vulgare</name>
    <name type="common">Barley</name>
    <dbReference type="NCBI Taxonomy" id="4513"/>
    <lineage>
        <taxon>Eukaryota</taxon>
        <taxon>Viridiplantae</taxon>
        <taxon>Streptophyta</taxon>
        <taxon>Embryophyta</taxon>
        <taxon>Tracheophyta</taxon>
        <taxon>Spermatophyta</taxon>
        <taxon>Magnoliopsida</taxon>
        <taxon>Liliopsida</taxon>
        <taxon>Poales</taxon>
        <taxon>Poaceae</taxon>
        <taxon>BOP clade</taxon>
        <taxon>Pooideae</taxon>
        <taxon>Triticodae</taxon>
        <taxon>Triticeae</taxon>
        <taxon>Hordeinae</taxon>
        <taxon>Hordeum</taxon>
    </lineage>
</organism>
<gene>
    <name type="primary">CAM</name>
</gene>
<comment type="function">
    <text>Calmodulin mediates the control of a large number of enzymes, ion channels and other proteins by Ca(2+). Among the enzymes to be stimulated by the calmodulin-Ca(2+) complex are a number of protein kinases and phosphatases.</text>
</comment>
<comment type="miscellaneous">
    <text>This protein has four functional calcium-binding sites.</text>
</comment>
<comment type="similarity">
    <text evidence="3">Belongs to the calmodulin family.</text>
</comment>